<reference key="1">
    <citation type="journal article" date="2004" name="Nat. Genet.">
        <title>Complete sequencing and characterization of 21,243 full-length human cDNAs.</title>
        <authorList>
            <person name="Ota T."/>
            <person name="Suzuki Y."/>
            <person name="Nishikawa T."/>
            <person name="Otsuki T."/>
            <person name="Sugiyama T."/>
            <person name="Irie R."/>
            <person name="Wakamatsu A."/>
            <person name="Hayashi K."/>
            <person name="Sato H."/>
            <person name="Nagai K."/>
            <person name="Kimura K."/>
            <person name="Makita H."/>
            <person name="Sekine M."/>
            <person name="Obayashi M."/>
            <person name="Nishi T."/>
            <person name="Shibahara T."/>
            <person name="Tanaka T."/>
            <person name="Ishii S."/>
            <person name="Yamamoto J."/>
            <person name="Saito K."/>
            <person name="Kawai Y."/>
            <person name="Isono Y."/>
            <person name="Nakamura Y."/>
            <person name="Nagahari K."/>
            <person name="Murakami K."/>
            <person name="Yasuda T."/>
            <person name="Iwayanagi T."/>
            <person name="Wagatsuma M."/>
            <person name="Shiratori A."/>
            <person name="Sudo H."/>
            <person name="Hosoiri T."/>
            <person name="Kaku Y."/>
            <person name="Kodaira H."/>
            <person name="Kondo H."/>
            <person name="Sugawara M."/>
            <person name="Takahashi M."/>
            <person name="Kanda K."/>
            <person name="Yokoi T."/>
            <person name="Furuya T."/>
            <person name="Kikkawa E."/>
            <person name="Omura Y."/>
            <person name="Abe K."/>
            <person name="Kamihara K."/>
            <person name="Katsuta N."/>
            <person name="Sato K."/>
            <person name="Tanikawa M."/>
            <person name="Yamazaki M."/>
            <person name="Ninomiya K."/>
            <person name="Ishibashi T."/>
            <person name="Yamashita H."/>
            <person name="Murakawa K."/>
            <person name="Fujimori K."/>
            <person name="Tanai H."/>
            <person name="Kimata M."/>
            <person name="Watanabe M."/>
            <person name="Hiraoka S."/>
            <person name="Chiba Y."/>
            <person name="Ishida S."/>
            <person name="Ono Y."/>
            <person name="Takiguchi S."/>
            <person name="Watanabe S."/>
            <person name="Yosida M."/>
            <person name="Hotuta T."/>
            <person name="Kusano J."/>
            <person name="Kanehori K."/>
            <person name="Takahashi-Fujii A."/>
            <person name="Hara H."/>
            <person name="Tanase T.-O."/>
            <person name="Nomura Y."/>
            <person name="Togiya S."/>
            <person name="Komai F."/>
            <person name="Hara R."/>
            <person name="Takeuchi K."/>
            <person name="Arita M."/>
            <person name="Imose N."/>
            <person name="Musashino K."/>
            <person name="Yuuki H."/>
            <person name="Oshima A."/>
            <person name="Sasaki N."/>
            <person name="Aotsuka S."/>
            <person name="Yoshikawa Y."/>
            <person name="Matsunawa H."/>
            <person name="Ichihara T."/>
            <person name="Shiohata N."/>
            <person name="Sano S."/>
            <person name="Moriya S."/>
            <person name="Momiyama H."/>
            <person name="Satoh N."/>
            <person name="Takami S."/>
            <person name="Terashima Y."/>
            <person name="Suzuki O."/>
            <person name="Nakagawa S."/>
            <person name="Senoh A."/>
            <person name="Mizoguchi H."/>
            <person name="Goto Y."/>
            <person name="Shimizu F."/>
            <person name="Wakebe H."/>
            <person name="Hishigaki H."/>
            <person name="Watanabe T."/>
            <person name="Sugiyama A."/>
            <person name="Takemoto M."/>
            <person name="Kawakami B."/>
            <person name="Yamazaki M."/>
            <person name="Watanabe K."/>
            <person name="Kumagai A."/>
            <person name="Itakura S."/>
            <person name="Fukuzumi Y."/>
            <person name="Fujimori Y."/>
            <person name="Komiyama M."/>
            <person name="Tashiro H."/>
            <person name="Tanigami A."/>
            <person name="Fujiwara T."/>
            <person name="Ono T."/>
            <person name="Yamada K."/>
            <person name="Fujii Y."/>
            <person name="Ozaki K."/>
            <person name="Hirao M."/>
            <person name="Ohmori Y."/>
            <person name="Kawabata A."/>
            <person name="Hikiji T."/>
            <person name="Kobatake N."/>
            <person name="Inagaki H."/>
            <person name="Ikema Y."/>
            <person name="Okamoto S."/>
            <person name="Okitani R."/>
            <person name="Kawakami T."/>
            <person name="Noguchi S."/>
            <person name="Itoh T."/>
            <person name="Shigeta K."/>
            <person name="Senba T."/>
            <person name="Matsumura K."/>
            <person name="Nakajima Y."/>
            <person name="Mizuno T."/>
            <person name="Morinaga M."/>
            <person name="Sasaki M."/>
            <person name="Togashi T."/>
            <person name="Oyama M."/>
            <person name="Hata H."/>
            <person name="Watanabe M."/>
            <person name="Komatsu T."/>
            <person name="Mizushima-Sugano J."/>
            <person name="Satoh T."/>
            <person name="Shirai Y."/>
            <person name="Takahashi Y."/>
            <person name="Nakagawa K."/>
            <person name="Okumura K."/>
            <person name="Nagase T."/>
            <person name="Nomura N."/>
            <person name="Kikuchi H."/>
            <person name="Masuho Y."/>
            <person name="Yamashita R."/>
            <person name="Nakai K."/>
            <person name="Yada T."/>
            <person name="Nakamura Y."/>
            <person name="Ohara O."/>
            <person name="Isogai T."/>
            <person name="Sugano S."/>
        </authorList>
    </citation>
    <scope>NUCLEOTIDE SEQUENCE [LARGE SCALE MRNA] (ISOFORMS 3; 4; 5; 6; 7 AND 8)</scope>
    <scope>VARIANTS ALA-62 AND MET-71</scope>
    <source>
        <tissue>Brain</tissue>
        <tissue>Lung</tissue>
        <tissue>Testis</tissue>
    </source>
</reference>
<reference key="2">
    <citation type="journal article" date="2006" name="Nature">
        <title>The DNA sequence, annotation and analysis of human chromosome 3.</title>
        <authorList>
            <person name="Muzny D.M."/>
            <person name="Scherer S.E."/>
            <person name="Kaul R."/>
            <person name="Wang J."/>
            <person name="Yu J."/>
            <person name="Sudbrak R."/>
            <person name="Buhay C.J."/>
            <person name="Chen R."/>
            <person name="Cree A."/>
            <person name="Ding Y."/>
            <person name="Dugan-Rocha S."/>
            <person name="Gill R."/>
            <person name="Gunaratne P."/>
            <person name="Harris R.A."/>
            <person name="Hawes A.C."/>
            <person name="Hernandez J."/>
            <person name="Hodgson A.V."/>
            <person name="Hume J."/>
            <person name="Jackson A."/>
            <person name="Khan Z.M."/>
            <person name="Kovar-Smith C."/>
            <person name="Lewis L.R."/>
            <person name="Lozado R.J."/>
            <person name="Metzker M.L."/>
            <person name="Milosavljevic A."/>
            <person name="Miner G.R."/>
            <person name="Morgan M.B."/>
            <person name="Nazareth L.V."/>
            <person name="Scott G."/>
            <person name="Sodergren E."/>
            <person name="Song X.-Z."/>
            <person name="Steffen D."/>
            <person name="Wei S."/>
            <person name="Wheeler D.A."/>
            <person name="Wright M.W."/>
            <person name="Worley K.C."/>
            <person name="Yuan Y."/>
            <person name="Zhang Z."/>
            <person name="Adams C.Q."/>
            <person name="Ansari-Lari M.A."/>
            <person name="Ayele M."/>
            <person name="Brown M.J."/>
            <person name="Chen G."/>
            <person name="Chen Z."/>
            <person name="Clendenning J."/>
            <person name="Clerc-Blankenburg K.P."/>
            <person name="Chen R."/>
            <person name="Chen Z."/>
            <person name="Davis C."/>
            <person name="Delgado O."/>
            <person name="Dinh H.H."/>
            <person name="Dong W."/>
            <person name="Draper H."/>
            <person name="Ernst S."/>
            <person name="Fu G."/>
            <person name="Gonzalez-Garay M.L."/>
            <person name="Garcia D.K."/>
            <person name="Gillett W."/>
            <person name="Gu J."/>
            <person name="Hao B."/>
            <person name="Haugen E."/>
            <person name="Havlak P."/>
            <person name="He X."/>
            <person name="Hennig S."/>
            <person name="Hu S."/>
            <person name="Huang W."/>
            <person name="Jackson L.R."/>
            <person name="Jacob L.S."/>
            <person name="Kelly S.H."/>
            <person name="Kube M."/>
            <person name="Levy R."/>
            <person name="Li Z."/>
            <person name="Liu B."/>
            <person name="Liu J."/>
            <person name="Liu W."/>
            <person name="Lu J."/>
            <person name="Maheshwari M."/>
            <person name="Nguyen B.-V."/>
            <person name="Okwuonu G.O."/>
            <person name="Palmeiri A."/>
            <person name="Pasternak S."/>
            <person name="Perez L.M."/>
            <person name="Phelps K.A."/>
            <person name="Plopper F.J."/>
            <person name="Qiang B."/>
            <person name="Raymond C."/>
            <person name="Rodriguez R."/>
            <person name="Saenphimmachak C."/>
            <person name="Santibanez J."/>
            <person name="Shen H."/>
            <person name="Shen Y."/>
            <person name="Subramanian S."/>
            <person name="Tabor P.E."/>
            <person name="Verduzco D."/>
            <person name="Waldron L."/>
            <person name="Wang J."/>
            <person name="Wang J."/>
            <person name="Wang Q."/>
            <person name="Williams G.A."/>
            <person name="Wong G.K.-S."/>
            <person name="Yao Z."/>
            <person name="Zhang J."/>
            <person name="Zhang X."/>
            <person name="Zhao G."/>
            <person name="Zhou J."/>
            <person name="Zhou Y."/>
            <person name="Nelson D."/>
            <person name="Lehrach H."/>
            <person name="Reinhardt R."/>
            <person name="Naylor S.L."/>
            <person name="Yang H."/>
            <person name="Olson M."/>
            <person name="Weinstock G."/>
            <person name="Gibbs R.A."/>
        </authorList>
    </citation>
    <scope>NUCLEOTIDE SEQUENCE [LARGE SCALE GENOMIC DNA]</scope>
</reference>
<reference key="3">
    <citation type="journal article" date="2004" name="Genome Res.">
        <title>The status, quality, and expansion of the NIH full-length cDNA project: the Mammalian Gene Collection (MGC).</title>
        <authorList>
            <consortium name="The MGC Project Team"/>
        </authorList>
    </citation>
    <scope>NUCLEOTIDE SEQUENCE [LARGE SCALE MRNA] (ISOFORMS 1; 2 AND 9)</scope>
    <scope>VARIANT ALA-62</scope>
    <source>
        <tissue>Brain</tissue>
        <tissue>Colon</tissue>
    </source>
</reference>
<reference key="4">
    <citation type="journal article" date="2016" name="Sci. Rep.">
        <title>Solute carrier 41A3 encodes for a mitochondrial Mg(2+) efflux system.</title>
        <authorList>
            <person name="Mastrototaro L."/>
            <person name="Smorodchenko A."/>
            <person name="Aschenbach J.R."/>
            <person name="Kolisek M."/>
            <person name="Sponder G."/>
        </authorList>
    </citation>
    <scope>FUNCTION</scope>
    <scope>TRANSPORTER ACTIVITY</scope>
    <scope>SUBCELLULAR LOCATION</scope>
</reference>
<comment type="function">
    <text evidence="5">Na(+)/Mg(2+) ion exchanger that acts as a predominant Mg(2+) efflux system at the mitochondrial inner membrane.</text>
</comment>
<comment type="catalytic activity">
    <reaction evidence="5">
        <text>Mg(2+)(in) + 2 Na(+)(out) = Mg(2+)(out) + 2 Na(+)(in)</text>
        <dbReference type="Rhea" id="RHEA:66616"/>
        <dbReference type="ChEBI" id="CHEBI:18420"/>
        <dbReference type="ChEBI" id="CHEBI:29101"/>
    </reaction>
    <physiologicalReaction direction="left-to-right" evidence="9">
        <dbReference type="Rhea" id="RHEA:66617"/>
    </physiologicalReaction>
</comment>
<comment type="interaction">
    <interactant intactId="EBI-7225508">
        <id>Q96GZ6</id>
    </interactant>
    <interactant intactId="EBI-12275524">
        <id>P23560-2</id>
        <label>BDNF</label>
    </interactant>
    <organismsDiffer>false</organismsDiffer>
    <experiments>3</experiments>
</comment>
<comment type="interaction">
    <interactant intactId="EBI-7225508">
        <id>Q96GZ6</id>
    </interactant>
    <interactant intactId="EBI-12003442">
        <id>Q8WVX3-2</id>
        <label>C4orf3</label>
    </interactant>
    <organismsDiffer>false</organismsDiffer>
    <experiments>3</experiments>
</comment>
<comment type="interaction">
    <interactant intactId="EBI-7225508">
        <id>Q96GZ6</id>
    </interactant>
    <interactant intactId="EBI-12934095">
        <id>P16619</id>
        <label>CCL3L3</label>
    </interactant>
    <organismsDiffer>false</organismsDiffer>
    <experiments>3</experiments>
</comment>
<comment type="interaction">
    <interactant intactId="EBI-7225508">
        <id>Q96GZ6</id>
    </interactant>
    <interactant intactId="EBI-354056">
        <id>P04406</id>
        <label>GAPDH</label>
    </interactant>
    <organismsDiffer>false</organismsDiffer>
    <experiments>3</experiments>
</comment>
<comment type="interaction">
    <interactant intactId="EBI-7225508">
        <id>Q96GZ6</id>
    </interactant>
    <interactant intactId="EBI-720480">
        <id>P24593</id>
        <label>IGFBP5</label>
    </interactant>
    <organismsDiffer>false</organismsDiffer>
    <experiments>3</experiments>
</comment>
<comment type="interaction">
    <interactant intactId="EBI-7225508">
        <id>Q96GZ6</id>
    </interactant>
    <interactant intactId="EBI-8744528">
        <id>Q86UT5</id>
        <label>NHERF4</label>
    </interactant>
    <organismsDiffer>false</organismsDiffer>
    <experiments>3</experiments>
</comment>
<comment type="interaction">
    <interactant intactId="EBI-7225508">
        <id>Q96GZ6</id>
    </interactant>
    <interactant intactId="EBI-12188331">
        <id>P60201-2</id>
        <label>PLP1</label>
    </interactant>
    <organismsDiffer>false</organismsDiffer>
    <experiments>3</experiments>
</comment>
<comment type="interaction">
    <interactant intactId="EBI-7225508">
        <id>Q96GZ6</id>
    </interactant>
    <interactant intactId="EBI-307352">
        <id>Q04864</id>
        <label>REL</label>
    </interactant>
    <organismsDiffer>false</organismsDiffer>
    <experiments>3</experiments>
</comment>
<comment type="interaction">
    <interactant intactId="EBI-7225508">
        <id>Q96GZ6</id>
    </interactant>
    <interactant intactId="EBI-8640191">
        <id>Q9NRQ5</id>
        <label>SMCO4</label>
    </interactant>
    <organismsDiffer>false</organismsDiffer>
    <experiments>3</experiments>
</comment>
<comment type="interaction">
    <interactant intactId="EBI-7225508">
        <id>Q96GZ6</id>
    </interactant>
    <interactant intactId="EBI-740595">
        <id>Q9UMX1</id>
        <label>SUFU</label>
    </interactant>
    <organismsDiffer>false</organismsDiffer>
    <experiments>3</experiments>
</comment>
<comment type="interaction">
    <interactant intactId="EBI-7225508">
        <id>Q96GZ6</id>
    </interactant>
    <interactant intactId="EBI-1045825">
        <id>P55061</id>
        <label>TMBIM6</label>
    </interactant>
    <organismsDiffer>false</organismsDiffer>
    <experiments>3</experiments>
</comment>
<comment type="interaction">
    <interactant intactId="EBI-7225508">
        <id>Q96GZ6</id>
    </interactant>
    <interactant intactId="EBI-12195249">
        <id>Q5TGU0</id>
        <label>TSPO2</label>
    </interactant>
    <organismsDiffer>false</organismsDiffer>
    <experiments>3</experiments>
</comment>
<comment type="subcellular location">
    <subcellularLocation>
        <location evidence="5">Mitochondrion inner membrane</location>
        <topology evidence="1">Multi-pass membrane protein</topology>
    </subcellularLocation>
</comment>
<comment type="alternative products">
    <event type="alternative splicing"/>
    <isoform>
        <id>Q96GZ6-1</id>
        <name>1</name>
        <sequence type="displayed"/>
    </isoform>
    <isoform>
        <id>Q96GZ6-2</id>
        <name>2</name>
        <sequence type="described" ref="VSP_026938"/>
    </isoform>
    <isoform>
        <id>Q96GZ6-3</id>
        <name>3</name>
        <sequence type="described" ref="VSP_026935"/>
    </isoform>
    <isoform>
        <id>Q96GZ6-4</id>
        <name>4</name>
        <sequence type="described" ref="VSP_026935 VSP_026938"/>
    </isoform>
    <isoform>
        <id>Q96GZ6-5</id>
        <name>5</name>
        <sequence type="described" ref="VSP_026934 VSP_026937"/>
    </isoform>
    <isoform>
        <id>Q96GZ6-6</id>
        <name>6</name>
        <sequence type="described" ref="VSP_026936 VSP_026937"/>
    </isoform>
    <isoform>
        <id>Q96GZ6-7</id>
        <name>7</name>
        <sequence type="described" ref="VSP_035505 VSP_035506 VSP_026937"/>
    </isoform>
    <isoform>
        <id>Q96GZ6-8</id>
        <name>8</name>
        <sequence type="described" ref="VSP_043676 VSP_026937"/>
    </isoform>
    <isoform>
        <id>Q96GZ6-9</id>
        <name>9</name>
        <sequence type="described" ref="VSP_054059 VSP_054060"/>
    </isoform>
</comment>
<comment type="similarity">
    <text evidence="8">Belongs to the SLC41A transporter family.</text>
</comment>
<gene>
    <name type="primary">SLC41A3</name>
</gene>
<protein>
    <recommendedName>
        <fullName>Solute carrier family 41 member 3</fullName>
    </recommendedName>
</protein>
<organism>
    <name type="scientific">Homo sapiens</name>
    <name type="common">Human</name>
    <dbReference type="NCBI Taxonomy" id="9606"/>
    <lineage>
        <taxon>Eukaryota</taxon>
        <taxon>Metazoa</taxon>
        <taxon>Chordata</taxon>
        <taxon>Craniata</taxon>
        <taxon>Vertebrata</taxon>
        <taxon>Euteleostomi</taxon>
        <taxon>Mammalia</taxon>
        <taxon>Eutheria</taxon>
        <taxon>Euarchontoglires</taxon>
        <taxon>Primates</taxon>
        <taxon>Haplorrhini</taxon>
        <taxon>Catarrhini</taxon>
        <taxon>Hominidae</taxon>
        <taxon>Homo</taxon>
    </lineage>
</organism>
<sequence length="507" mass="54767">MDGTETRQRRLDSCGKPGELGLPHPLSTGGLPVASEDGALRAPESQSVTPKPLETEPSRETTWSIGLQVTVPFMFAGLGLSWAGMLLDYFQHWPVFVEVKDLLTLVPPLVGLKGNLEMTLASRLSTAANTGQIDDPQEQHRVISSNLALIQVQATVVGLLAAVAALLLGVVSREEVDVAKVELLCASSVLTAFLAAFALGVLMVCIVIGARKLGVNPDNIATPIAASLGDLITLSILALVSSFFYRHKDSRYLTPLVCLSFAALTPVWVLIAKQSPPIVKILKFGWFPIILAMVISSFGGLILSKTVSKQQYKGMAIFTPVICGVGGNLVAIQTSRISTYLHMWSAPGVLPLQMKKFWPNPCSTFCTSEINSMSARVLLLLVVPGHLIFFYIIYLVEGQSVINSQTFVVLYLLAGLIQVTILLYLAEVMVRLTWHQALDPDNHCIPYLTGLGDLLGSSSVGHTAAVPRRCTASPGWGLIQPFICTQHLIVSLLSFYFPFCLLAKTSI</sequence>
<feature type="chain" id="PRO_0000295592" description="Solute carrier family 41 member 3">
    <location>
        <begin position="1"/>
        <end position="507"/>
    </location>
</feature>
<feature type="transmembrane region" description="Helical" evidence="1">
    <location>
        <begin position="67"/>
        <end position="87"/>
    </location>
</feature>
<feature type="transmembrane region" description="Helical" evidence="1">
    <location>
        <begin position="152"/>
        <end position="172"/>
    </location>
</feature>
<feature type="transmembrane region" description="Helical" evidence="1">
    <location>
        <begin position="189"/>
        <end position="209"/>
    </location>
</feature>
<feature type="transmembrane region" description="Helical" evidence="1">
    <location>
        <begin position="220"/>
        <end position="240"/>
    </location>
</feature>
<feature type="transmembrane region" description="Helical" evidence="1">
    <location>
        <begin position="252"/>
        <end position="272"/>
    </location>
</feature>
<feature type="transmembrane region" description="Helical" evidence="1">
    <location>
        <begin position="284"/>
        <end position="304"/>
    </location>
</feature>
<feature type="transmembrane region" description="Helical" evidence="1">
    <location>
        <begin position="314"/>
        <end position="334"/>
    </location>
</feature>
<feature type="transmembrane region" description="Helical" evidence="1">
    <location>
        <begin position="377"/>
        <end position="397"/>
    </location>
</feature>
<feature type="transmembrane region" description="Helical" evidence="1">
    <location>
        <begin position="406"/>
        <end position="426"/>
    </location>
</feature>
<feature type="transmembrane region" description="Helical" evidence="1">
    <location>
        <begin position="482"/>
        <end position="502"/>
    </location>
</feature>
<feature type="region of interest" description="Disordered" evidence="2">
    <location>
        <begin position="1"/>
        <end position="60"/>
    </location>
</feature>
<feature type="compositionally biased region" description="Basic and acidic residues" evidence="2">
    <location>
        <begin position="1"/>
        <end position="13"/>
    </location>
</feature>
<feature type="splice variant" id="VSP_043676" description="In isoform 8." evidence="6">
    <location>
        <begin position="1"/>
        <end position="117"/>
    </location>
</feature>
<feature type="splice variant" id="VSP_035505" description="In isoform 7." evidence="6">
    <location>
        <begin position="1"/>
        <end position="26"/>
    </location>
</feature>
<feature type="splice variant" id="VSP_035506" description="In isoform 7." evidence="6">
    <original>STGGLPVASEDGALRAPESQSVTPKPLETEPSRETTWSIGLQVTVPFMFAGLGLSWAGMLLDYF</original>
    <variation>MVVTQLNLEFCFQGKKLRGFSCELTRSPHGVLPESFFTIMCQVVVPILLSGLCMMTAGLVMNTI</variation>
    <location>
        <begin position="27"/>
        <end position="90"/>
    </location>
</feature>
<feature type="splice variant" id="VSP_026934" description="In isoform 5." evidence="6">
    <location>
        <begin position="61"/>
        <end position="69"/>
    </location>
</feature>
<feature type="splice variant" id="VSP_026935" description="In isoform 3 and isoform 4." evidence="6">
    <location>
        <begin position="92"/>
        <end position="127"/>
    </location>
</feature>
<feature type="splice variant" id="VSP_026936" description="In isoform 6." evidence="6">
    <location>
        <begin position="218"/>
        <end position="266"/>
    </location>
</feature>
<feature type="splice variant" id="VSP_026937" description="In isoform 5, isoform 6, isoform 7 and isoform 8." evidence="6">
    <original>SSSVGHTAAVPRRCTASPGWGLIQPFICTQHLIVSLLSFYFPFCLLAKTSI</original>
    <variation>TGLLALCFFTDWLLKSKAELGGISELASGPP</variation>
    <location>
        <begin position="457"/>
        <end position="507"/>
    </location>
</feature>
<feature type="splice variant" id="VSP_054059" description="In isoform 9." evidence="7">
    <original>SSSVGHTAAVPRRCTASPGWGLIQPFICTQH</original>
    <variation>TGLLALCFFTDWLLKSKAELGGISELASGPP</variation>
    <location>
        <begin position="457"/>
        <end position="487"/>
    </location>
</feature>
<feature type="splice variant" id="VSP_054060" description="In isoform 9." evidence="7">
    <location>
        <begin position="488"/>
        <end position="507"/>
    </location>
</feature>
<feature type="splice variant" id="VSP_026938" description="In isoform 2 and isoform 4." evidence="6 7">
    <location>
        <begin position="501"/>
        <end position="507"/>
    </location>
</feature>
<feature type="sequence variant" id="VAR_033296" description="In dbSNP:rs4234270." evidence="3 4">
    <original>T</original>
    <variation>A</variation>
    <location>
        <position position="62"/>
    </location>
</feature>
<feature type="sequence variant" id="VAR_046667" description="In dbSNP:rs11543283." evidence="3">
    <original>V</original>
    <variation>M</variation>
    <location>
        <position position="71"/>
    </location>
</feature>
<feature type="sequence conflict" description="In Ref. 1; BAC03717." evidence="8" ref="1">
    <original>A</original>
    <variation>G</variation>
    <location>
        <position position="331"/>
    </location>
</feature>
<feature type="sequence conflict" description="In Ref. 1; BAB13938." evidence="8" ref="1">
    <original>L</original>
    <variation>P</variation>
    <location>
        <position position="387"/>
    </location>
</feature>
<feature type="sequence conflict" description="In Ref. 1; BAC03717." evidence="8" ref="1">
    <original>Q</original>
    <variation>R</variation>
    <location>
        <position position="405"/>
    </location>
</feature>
<feature type="sequence conflict" description="In Ref. 1; BAB13938." evidence="8" ref="1">
    <original>L</original>
    <variation>P</variation>
    <location>
        <position position="448"/>
    </location>
</feature>
<feature type="sequence conflict" description="In Ref. 1; BAG52701." evidence="8" ref="1">
    <original>G</original>
    <variation>S</variation>
    <location sequence="Q96GZ6-7">
        <position position="432"/>
    </location>
</feature>
<evidence type="ECO:0000255" key="1"/>
<evidence type="ECO:0000256" key="2">
    <source>
        <dbReference type="SAM" id="MobiDB-lite"/>
    </source>
</evidence>
<evidence type="ECO:0000269" key="3">
    <source>
    </source>
</evidence>
<evidence type="ECO:0000269" key="4">
    <source>
    </source>
</evidence>
<evidence type="ECO:0000269" key="5">
    <source>
    </source>
</evidence>
<evidence type="ECO:0000303" key="6">
    <source>
    </source>
</evidence>
<evidence type="ECO:0000303" key="7">
    <source>
    </source>
</evidence>
<evidence type="ECO:0000305" key="8"/>
<evidence type="ECO:0000305" key="9">
    <source>
    </source>
</evidence>
<dbReference type="EMBL" id="AK000480">
    <property type="protein sequence ID" value="BAA91192.1"/>
    <property type="molecule type" value="mRNA"/>
</dbReference>
<dbReference type="EMBL" id="AK021925">
    <property type="protein sequence ID" value="BAB13938.1"/>
    <property type="molecule type" value="mRNA"/>
</dbReference>
<dbReference type="EMBL" id="AK022780">
    <property type="protein sequence ID" value="BAB14241.1"/>
    <property type="molecule type" value="mRNA"/>
</dbReference>
<dbReference type="EMBL" id="AK091671">
    <property type="protein sequence ID" value="BAC03717.1"/>
    <property type="molecule type" value="mRNA"/>
</dbReference>
<dbReference type="EMBL" id="AK093380">
    <property type="protein sequence ID" value="BAG52701.1"/>
    <property type="molecule type" value="mRNA"/>
</dbReference>
<dbReference type="EMBL" id="AK298070">
    <property type="protein sequence ID" value="BAH12718.1"/>
    <property type="molecule type" value="mRNA"/>
</dbReference>
<dbReference type="EMBL" id="AC079848">
    <property type="status" value="NOT_ANNOTATED_CDS"/>
    <property type="molecule type" value="Genomic_DNA"/>
</dbReference>
<dbReference type="EMBL" id="AC092903">
    <property type="status" value="NOT_ANNOTATED_CDS"/>
    <property type="molecule type" value="Genomic_DNA"/>
</dbReference>
<dbReference type="EMBL" id="AC117422">
    <property type="status" value="NOT_ANNOTATED_CDS"/>
    <property type="molecule type" value="Genomic_DNA"/>
</dbReference>
<dbReference type="EMBL" id="BC009444">
    <property type="status" value="NOT_ANNOTATED_CDS"/>
    <property type="molecule type" value="mRNA"/>
</dbReference>
<dbReference type="EMBL" id="BC009039">
    <property type="protein sequence ID" value="AAH09039.1"/>
    <property type="molecule type" value="mRNA"/>
</dbReference>
<dbReference type="EMBL" id="BC028241">
    <property type="protein sequence ID" value="AAH28241.1"/>
    <property type="molecule type" value="mRNA"/>
</dbReference>
<dbReference type="CCDS" id="CCDS33842.1">
    <molecule id="Q96GZ6-3"/>
</dbReference>
<dbReference type="CCDS" id="CCDS33843.1">
    <molecule id="Q96GZ6-1"/>
</dbReference>
<dbReference type="CCDS" id="CCDS33844.1">
    <molecule id="Q96GZ6-7"/>
</dbReference>
<dbReference type="CCDS" id="CCDS43144.1">
    <molecule id="Q96GZ6-9"/>
</dbReference>
<dbReference type="CCDS" id="CCDS54635.1">
    <molecule id="Q96GZ6-8"/>
</dbReference>
<dbReference type="RefSeq" id="NP_001008485.2">
    <molecule id="Q96GZ6-1"/>
    <property type="nucleotide sequence ID" value="NM_001008485.2"/>
</dbReference>
<dbReference type="RefSeq" id="NP_001008486.2">
    <molecule id="Q96GZ6-3"/>
    <property type="nucleotide sequence ID" value="NM_001008486.2"/>
</dbReference>
<dbReference type="RefSeq" id="NP_001008487.1">
    <molecule id="Q96GZ6-7"/>
    <property type="nucleotide sequence ID" value="NM_001008487.2"/>
</dbReference>
<dbReference type="RefSeq" id="NP_001157947.1">
    <molecule id="Q96GZ6-8"/>
    <property type="nucleotide sequence ID" value="NM_001164475.2"/>
</dbReference>
<dbReference type="RefSeq" id="XP_005247619.1">
    <molecule id="Q96GZ6-1"/>
    <property type="nucleotide sequence ID" value="XM_005247562.1"/>
</dbReference>
<dbReference type="RefSeq" id="XP_005247620.1">
    <molecule id="Q96GZ6-1"/>
    <property type="nucleotide sequence ID" value="XM_005247563.3"/>
</dbReference>
<dbReference type="RefSeq" id="XP_006713744.1">
    <molecule id="Q96GZ6-1"/>
    <property type="nucleotide sequence ID" value="XM_006713681.4"/>
</dbReference>
<dbReference type="RefSeq" id="XP_016862195.1">
    <molecule id="Q96GZ6-9"/>
    <property type="nucleotide sequence ID" value="XM_017006706.2"/>
</dbReference>
<dbReference type="RefSeq" id="XP_016862196.1">
    <molecule id="Q96GZ6-9"/>
    <property type="nucleotide sequence ID" value="XM_017006707.2"/>
</dbReference>
<dbReference type="RefSeq" id="XP_024309377.1">
    <molecule id="Q96GZ6-9"/>
    <property type="nucleotide sequence ID" value="XM_024453609.2"/>
</dbReference>
<dbReference type="RefSeq" id="XP_024309378.1">
    <molecule id="Q96GZ6-3"/>
    <property type="nucleotide sequence ID" value="XM_024453610.1"/>
</dbReference>
<dbReference type="BioGRID" id="120285">
    <property type="interactions" value="40"/>
</dbReference>
<dbReference type="FunCoup" id="Q96GZ6">
    <property type="interactions" value="167"/>
</dbReference>
<dbReference type="IntAct" id="Q96GZ6">
    <property type="interactions" value="30"/>
</dbReference>
<dbReference type="MINT" id="Q96GZ6"/>
<dbReference type="STRING" id="9606.ENSP00000326070"/>
<dbReference type="DrugBank" id="DB14513">
    <property type="generic name" value="Magnesium"/>
</dbReference>
<dbReference type="DrugBank" id="DB09481">
    <property type="generic name" value="Magnesium carbonate"/>
</dbReference>
<dbReference type="TCDB" id="1.A.26.2.3">
    <property type="family name" value="the mg(2+) transporter-e (mgte) family"/>
</dbReference>
<dbReference type="iPTMnet" id="Q96GZ6"/>
<dbReference type="PhosphoSitePlus" id="Q96GZ6"/>
<dbReference type="SwissPalm" id="Q96GZ6"/>
<dbReference type="BioMuta" id="SLC41A3"/>
<dbReference type="DMDM" id="313104184"/>
<dbReference type="jPOST" id="Q96GZ6"/>
<dbReference type="MassIVE" id="Q96GZ6"/>
<dbReference type="PaxDb" id="9606-ENSP00000326070"/>
<dbReference type="PeptideAtlas" id="Q96GZ6"/>
<dbReference type="ProteomicsDB" id="17250"/>
<dbReference type="ProteomicsDB" id="76685">
    <molecule id="Q96GZ6-1"/>
</dbReference>
<dbReference type="ProteomicsDB" id="76686">
    <molecule id="Q96GZ6-2"/>
</dbReference>
<dbReference type="ProteomicsDB" id="76687">
    <molecule id="Q96GZ6-3"/>
</dbReference>
<dbReference type="ProteomicsDB" id="76688">
    <molecule id="Q96GZ6-4"/>
</dbReference>
<dbReference type="ProteomicsDB" id="76689">
    <molecule id="Q96GZ6-5"/>
</dbReference>
<dbReference type="ProteomicsDB" id="76690">
    <molecule id="Q96GZ6-6"/>
</dbReference>
<dbReference type="ProteomicsDB" id="76691">
    <molecule id="Q96GZ6-7"/>
</dbReference>
<dbReference type="ProteomicsDB" id="76692">
    <molecule id="Q96GZ6-8"/>
</dbReference>
<dbReference type="Pumba" id="Q96GZ6"/>
<dbReference type="TopDownProteomics" id="Q96GZ6-7">
    <molecule id="Q96GZ6-7"/>
</dbReference>
<dbReference type="Antibodypedia" id="33042">
    <property type="antibodies" value="36 antibodies from 14 providers"/>
</dbReference>
<dbReference type="DNASU" id="54946"/>
<dbReference type="Ensembl" id="ENST00000315891.10">
    <molecule id="Q96GZ6-1"/>
    <property type="protein sequence ID" value="ENSP00000326070.6"/>
    <property type="gene ID" value="ENSG00000114544.17"/>
</dbReference>
<dbReference type="Ensembl" id="ENST00000346785.9">
    <molecule id="Q96GZ6-3"/>
    <property type="protein sequence ID" value="ENSP00000264471.6"/>
    <property type="gene ID" value="ENSG00000114544.17"/>
</dbReference>
<dbReference type="Ensembl" id="ENST00000360370.9">
    <molecule id="Q96GZ6-9"/>
    <property type="protein sequence ID" value="ENSP00000353533.4"/>
    <property type="gene ID" value="ENSG00000114544.17"/>
</dbReference>
<dbReference type="Ensembl" id="ENST00000383598.6">
    <molecule id="Q96GZ6-7"/>
    <property type="protein sequence ID" value="ENSP00000373092.2"/>
    <property type="gene ID" value="ENSG00000114544.17"/>
</dbReference>
<dbReference type="Ensembl" id="ENST00000508835.5">
    <molecule id="Q96GZ6-8"/>
    <property type="protein sequence ID" value="ENSP00000427409.1"/>
    <property type="gene ID" value="ENSG00000114544.17"/>
</dbReference>
<dbReference type="GeneID" id="54946"/>
<dbReference type="KEGG" id="hsa:54946"/>
<dbReference type="MANE-Select" id="ENST00000360370.9">
    <molecule id="Q96GZ6-9"/>
    <property type="protein sequence ID" value="ENSP00000353533.4"/>
    <property type="RefSeq nucleotide sequence ID" value="NM_017836.4"/>
    <property type="RefSeq protein sequence ID" value="NP_060306.4"/>
</dbReference>
<dbReference type="UCSC" id="uc003eii.4">
    <molecule id="Q96GZ6-1"/>
    <property type="organism name" value="human"/>
</dbReference>
<dbReference type="AGR" id="HGNC:31046"/>
<dbReference type="CTD" id="54946"/>
<dbReference type="DisGeNET" id="54946"/>
<dbReference type="GeneCards" id="SLC41A3"/>
<dbReference type="HGNC" id="HGNC:31046">
    <property type="gene designation" value="SLC41A3"/>
</dbReference>
<dbReference type="HPA" id="ENSG00000114544">
    <property type="expression patterns" value="Low tissue specificity"/>
</dbReference>
<dbReference type="MIM" id="610803">
    <property type="type" value="gene"/>
</dbReference>
<dbReference type="neXtProt" id="NX_Q96GZ6"/>
<dbReference type="OpenTargets" id="ENSG00000114544"/>
<dbReference type="PharmGKB" id="PA134878151"/>
<dbReference type="VEuPathDB" id="HostDB:ENSG00000114544"/>
<dbReference type="eggNOG" id="KOG3788">
    <property type="taxonomic scope" value="Eukaryota"/>
</dbReference>
<dbReference type="GeneTree" id="ENSGT00950000183042"/>
<dbReference type="HOGENOM" id="CLU_018207_3_0_1"/>
<dbReference type="InParanoid" id="Q96GZ6"/>
<dbReference type="OMA" id="NLEFCFQ"/>
<dbReference type="OrthoDB" id="5791097at2759"/>
<dbReference type="PAN-GO" id="Q96GZ6">
    <property type="GO annotations" value="1 GO annotation based on evolutionary models"/>
</dbReference>
<dbReference type="PhylomeDB" id="Q96GZ6"/>
<dbReference type="TreeFam" id="TF313647"/>
<dbReference type="PathwayCommons" id="Q96GZ6"/>
<dbReference type="SignaLink" id="Q96GZ6"/>
<dbReference type="BioGRID-ORCS" id="54946">
    <property type="hits" value="12 hits in 1154 CRISPR screens"/>
</dbReference>
<dbReference type="ChiTaRS" id="SLC41A3">
    <property type="organism name" value="human"/>
</dbReference>
<dbReference type="GeneWiki" id="SLC41A3"/>
<dbReference type="GenomeRNAi" id="54946"/>
<dbReference type="Pharos" id="Q96GZ6">
    <property type="development level" value="Tdark"/>
</dbReference>
<dbReference type="PRO" id="PR:Q96GZ6"/>
<dbReference type="Proteomes" id="UP000005640">
    <property type="component" value="Chromosome 3"/>
</dbReference>
<dbReference type="RNAct" id="Q96GZ6">
    <property type="molecule type" value="protein"/>
</dbReference>
<dbReference type="Bgee" id="ENSG00000114544">
    <property type="expression patterns" value="Expressed in right hemisphere of cerebellum and 187 other cell types or tissues"/>
</dbReference>
<dbReference type="ExpressionAtlas" id="Q96GZ6">
    <property type="expression patterns" value="baseline and differential"/>
</dbReference>
<dbReference type="GO" id="GO:0005743">
    <property type="term" value="C:mitochondrial inner membrane"/>
    <property type="evidence" value="ECO:0000314"/>
    <property type="project" value="UniProtKB"/>
</dbReference>
<dbReference type="GO" id="GO:0005886">
    <property type="term" value="C:plasma membrane"/>
    <property type="evidence" value="ECO:0000314"/>
    <property type="project" value="HPA"/>
</dbReference>
<dbReference type="GO" id="GO:0061768">
    <property type="term" value="F:magnesium:sodium antiporter activity"/>
    <property type="evidence" value="ECO:0000314"/>
    <property type="project" value="UniProtKB"/>
</dbReference>
<dbReference type="GO" id="GO:0045016">
    <property type="term" value="P:mitochondrial magnesium ion transmembrane transport"/>
    <property type="evidence" value="ECO:0000314"/>
    <property type="project" value="UniProtKB"/>
</dbReference>
<dbReference type="FunFam" id="1.10.357.20:FF:000001">
    <property type="entry name" value="Solute carrier family 41 member 2"/>
    <property type="match status" value="1"/>
</dbReference>
<dbReference type="FunFam" id="1.10.357.20:FF:000002">
    <property type="entry name" value="Solute carrier family 41, member 2"/>
    <property type="match status" value="1"/>
</dbReference>
<dbReference type="Gene3D" id="1.10.357.20">
    <property type="entry name" value="SLC41 divalent cation transporters, integral membrane domain"/>
    <property type="match status" value="2"/>
</dbReference>
<dbReference type="InterPro" id="IPR006667">
    <property type="entry name" value="SLC41_membr_dom"/>
</dbReference>
<dbReference type="InterPro" id="IPR036739">
    <property type="entry name" value="SLC41_membr_dom_sf"/>
</dbReference>
<dbReference type="InterPro" id="IPR045349">
    <property type="entry name" value="SLC41A1-3"/>
</dbReference>
<dbReference type="PANTHER" id="PTHR16228">
    <property type="entry name" value="DIVALENT CATION TRANSPORTER SOLUTE CARRIER FAMILY 41"/>
    <property type="match status" value="1"/>
</dbReference>
<dbReference type="PANTHER" id="PTHR16228:SF22">
    <property type="entry name" value="SOLUTE CARRIER FAMILY 41 MEMBER 3"/>
    <property type="match status" value="1"/>
</dbReference>
<dbReference type="Pfam" id="PF01769">
    <property type="entry name" value="MgtE"/>
    <property type="match status" value="2"/>
</dbReference>
<dbReference type="SUPFAM" id="SSF161093">
    <property type="entry name" value="MgtE membrane domain-like"/>
    <property type="match status" value="2"/>
</dbReference>
<keyword id="KW-0025">Alternative splicing</keyword>
<keyword id="KW-0406">Ion transport</keyword>
<keyword id="KW-0460">Magnesium</keyword>
<keyword id="KW-0472">Membrane</keyword>
<keyword id="KW-0496">Mitochondrion</keyword>
<keyword id="KW-0999">Mitochondrion inner membrane</keyword>
<keyword id="KW-1267">Proteomics identification</keyword>
<keyword id="KW-1185">Reference proteome</keyword>
<keyword id="KW-0812">Transmembrane</keyword>
<keyword id="KW-1133">Transmembrane helix</keyword>
<keyword id="KW-0813">Transport</keyword>
<proteinExistence type="evidence at protein level"/>
<name>S41A3_HUMAN</name>
<accession>Q96GZ6</accession>
<accession>A6ND60</accession>
<accession>B3KSD9</accession>
<accession>B7Z4Y2</accession>
<accession>C9JE96</accession>
<accession>E7ENY4</accession>
<accession>Q8N342</accession>
<accession>Q8NB27</accession>
<accession>Q9H9I6</accession>
<accession>Q9HAB1</accession>
<accession>Q9NX30</accession>